<name>RL4_XYLFA</name>
<accession>Q9PE75</accession>
<keyword id="KW-0687">Ribonucleoprotein</keyword>
<keyword id="KW-0689">Ribosomal protein</keyword>
<keyword id="KW-0694">RNA-binding</keyword>
<keyword id="KW-0699">rRNA-binding</keyword>
<dbReference type="EMBL" id="AE003849">
    <property type="protein sequence ID" value="AAF83963.1"/>
    <property type="molecule type" value="Genomic_DNA"/>
</dbReference>
<dbReference type="PIR" id="A82717">
    <property type="entry name" value="A82717"/>
</dbReference>
<dbReference type="RefSeq" id="WP_010893669.1">
    <property type="nucleotide sequence ID" value="NC_002488.3"/>
</dbReference>
<dbReference type="SMR" id="Q9PE75"/>
<dbReference type="STRING" id="160492.XF_1153"/>
<dbReference type="KEGG" id="xfa:XF_1153"/>
<dbReference type="eggNOG" id="COG0088">
    <property type="taxonomic scope" value="Bacteria"/>
</dbReference>
<dbReference type="HOGENOM" id="CLU_041575_5_2_6"/>
<dbReference type="Proteomes" id="UP000000812">
    <property type="component" value="Chromosome"/>
</dbReference>
<dbReference type="GO" id="GO:1990904">
    <property type="term" value="C:ribonucleoprotein complex"/>
    <property type="evidence" value="ECO:0007669"/>
    <property type="project" value="UniProtKB-KW"/>
</dbReference>
<dbReference type="GO" id="GO:0005840">
    <property type="term" value="C:ribosome"/>
    <property type="evidence" value="ECO:0007669"/>
    <property type="project" value="UniProtKB-KW"/>
</dbReference>
<dbReference type="GO" id="GO:0019843">
    <property type="term" value="F:rRNA binding"/>
    <property type="evidence" value="ECO:0007669"/>
    <property type="project" value="UniProtKB-UniRule"/>
</dbReference>
<dbReference type="GO" id="GO:0003735">
    <property type="term" value="F:structural constituent of ribosome"/>
    <property type="evidence" value="ECO:0007669"/>
    <property type="project" value="InterPro"/>
</dbReference>
<dbReference type="GO" id="GO:0006412">
    <property type="term" value="P:translation"/>
    <property type="evidence" value="ECO:0007669"/>
    <property type="project" value="UniProtKB-UniRule"/>
</dbReference>
<dbReference type="Gene3D" id="3.40.1370.10">
    <property type="match status" value="1"/>
</dbReference>
<dbReference type="HAMAP" id="MF_01328_B">
    <property type="entry name" value="Ribosomal_uL4_B"/>
    <property type="match status" value="1"/>
</dbReference>
<dbReference type="InterPro" id="IPR002136">
    <property type="entry name" value="Ribosomal_uL4"/>
</dbReference>
<dbReference type="InterPro" id="IPR013005">
    <property type="entry name" value="Ribosomal_uL4-like"/>
</dbReference>
<dbReference type="InterPro" id="IPR023574">
    <property type="entry name" value="Ribosomal_uL4_dom_sf"/>
</dbReference>
<dbReference type="NCBIfam" id="TIGR03953">
    <property type="entry name" value="rplD_bact"/>
    <property type="match status" value="1"/>
</dbReference>
<dbReference type="PANTHER" id="PTHR10746">
    <property type="entry name" value="50S RIBOSOMAL PROTEIN L4"/>
    <property type="match status" value="1"/>
</dbReference>
<dbReference type="PANTHER" id="PTHR10746:SF6">
    <property type="entry name" value="LARGE RIBOSOMAL SUBUNIT PROTEIN UL4M"/>
    <property type="match status" value="1"/>
</dbReference>
<dbReference type="Pfam" id="PF00573">
    <property type="entry name" value="Ribosomal_L4"/>
    <property type="match status" value="1"/>
</dbReference>
<dbReference type="SUPFAM" id="SSF52166">
    <property type="entry name" value="Ribosomal protein L4"/>
    <property type="match status" value="1"/>
</dbReference>
<comment type="function">
    <text evidence="1">One of the primary rRNA binding proteins, this protein initially binds near the 5'-end of the 23S rRNA. It is important during the early stages of 50S assembly. It makes multiple contacts with different domains of the 23S rRNA in the assembled 50S subunit and ribosome.</text>
</comment>
<comment type="function">
    <text evidence="1">Forms part of the polypeptide exit tunnel.</text>
</comment>
<comment type="subunit">
    <text evidence="1">Part of the 50S ribosomal subunit.</text>
</comment>
<comment type="similarity">
    <text evidence="1">Belongs to the universal ribosomal protein uL4 family.</text>
</comment>
<protein>
    <recommendedName>
        <fullName evidence="1">Large ribosomal subunit protein uL4</fullName>
    </recommendedName>
    <alternativeName>
        <fullName evidence="3">50S ribosomal protein L4</fullName>
    </alternativeName>
</protein>
<sequence length="202" mass="21677">MDLTIVGSDNTLPVSDVVFGREFSEALVHQIVVAYRNTARSGTKAQKSRSQVSGTTKKSKKQKGGGARHGALTAPIFVGGGVAFAAKPRSFSQKVNRKQYRSAICSIFSELNRQGRLKVVDAFDVEVSKTKVFAEKIKSLEVVGSRLLIVSDGISECLSLSSRNLPCVDVRSVQALDPVALVGSDVVVLTVGAVKKIEEWLV</sequence>
<gene>
    <name evidence="1" type="primary">rplD</name>
    <name type="ordered locus">XF_1153</name>
</gene>
<evidence type="ECO:0000255" key="1">
    <source>
        <dbReference type="HAMAP-Rule" id="MF_01328"/>
    </source>
</evidence>
<evidence type="ECO:0000256" key="2">
    <source>
        <dbReference type="SAM" id="MobiDB-lite"/>
    </source>
</evidence>
<evidence type="ECO:0000305" key="3"/>
<proteinExistence type="inferred from homology"/>
<feature type="chain" id="PRO_0000129317" description="Large ribosomal subunit protein uL4">
    <location>
        <begin position="1"/>
        <end position="202"/>
    </location>
</feature>
<feature type="region of interest" description="Disordered" evidence="2">
    <location>
        <begin position="42"/>
        <end position="70"/>
    </location>
</feature>
<feature type="compositionally biased region" description="Polar residues" evidence="2">
    <location>
        <begin position="42"/>
        <end position="52"/>
    </location>
</feature>
<reference key="1">
    <citation type="journal article" date="2000" name="Nature">
        <title>The genome sequence of the plant pathogen Xylella fastidiosa.</title>
        <authorList>
            <person name="Simpson A.J.G."/>
            <person name="Reinach F.C."/>
            <person name="Arruda P."/>
            <person name="Abreu F.A."/>
            <person name="Acencio M."/>
            <person name="Alvarenga R."/>
            <person name="Alves L.M.C."/>
            <person name="Araya J.E."/>
            <person name="Baia G.S."/>
            <person name="Baptista C.S."/>
            <person name="Barros M.H."/>
            <person name="Bonaccorsi E.D."/>
            <person name="Bordin S."/>
            <person name="Bove J.M."/>
            <person name="Briones M.R.S."/>
            <person name="Bueno M.R.P."/>
            <person name="Camargo A.A."/>
            <person name="Camargo L.E.A."/>
            <person name="Carraro D.M."/>
            <person name="Carrer H."/>
            <person name="Colauto N.B."/>
            <person name="Colombo C."/>
            <person name="Costa F.F."/>
            <person name="Costa M.C.R."/>
            <person name="Costa-Neto C.M."/>
            <person name="Coutinho L.L."/>
            <person name="Cristofani M."/>
            <person name="Dias-Neto E."/>
            <person name="Docena C."/>
            <person name="El-Dorry H."/>
            <person name="Facincani A.P."/>
            <person name="Ferreira A.J.S."/>
            <person name="Ferreira V.C.A."/>
            <person name="Ferro J.A."/>
            <person name="Fraga J.S."/>
            <person name="Franca S.C."/>
            <person name="Franco M.C."/>
            <person name="Frohme M."/>
            <person name="Furlan L.R."/>
            <person name="Garnier M."/>
            <person name="Goldman G.H."/>
            <person name="Goldman M.H.S."/>
            <person name="Gomes S.L."/>
            <person name="Gruber A."/>
            <person name="Ho P.L."/>
            <person name="Hoheisel J.D."/>
            <person name="Junqueira M.L."/>
            <person name="Kemper E.L."/>
            <person name="Kitajima J.P."/>
            <person name="Krieger J.E."/>
            <person name="Kuramae E.E."/>
            <person name="Laigret F."/>
            <person name="Lambais M.R."/>
            <person name="Leite L.C.C."/>
            <person name="Lemos E.G.M."/>
            <person name="Lemos M.V.F."/>
            <person name="Lopes S.A."/>
            <person name="Lopes C.R."/>
            <person name="Machado J.A."/>
            <person name="Machado M.A."/>
            <person name="Madeira A.M.B.N."/>
            <person name="Madeira H.M.F."/>
            <person name="Marino C.L."/>
            <person name="Marques M.V."/>
            <person name="Martins E.A.L."/>
            <person name="Martins E.M.F."/>
            <person name="Matsukuma A.Y."/>
            <person name="Menck C.F.M."/>
            <person name="Miracca E.C."/>
            <person name="Miyaki C.Y."/>
            <person name="Monteiro-Vitorello C.B."/>
            <person name="Moon D.H."/>
            <person name="Nagai M.A."/>
            <person name="Nascimento A.L.T.O."/>
            <person name="Netto L.E.S."/>
            <person name="Nhani A. Jr."/>
            <person name="Nobrega F.G."/>
            <person name="Nunes L.R."/>
            <person name="Oliveira M.A."/>
            <person name="de Oliveira M.C."/>
            <person name="de Oliveira R.C."/>
            <person name="Palmieri D.A."/>
            <person name="Paris A."/>
            <person name="Peixoto B.R."/>
            <person name="Pereira G.A.G."/>
            <person name="Pereira H.A. Jr."/>
            <person name="Pesquero J.B."/>
            <person name="Quaggio R.B."/>
            <person name="Roberto P.G."/>
            <person name="Rodrigues V."/>
            <person name="de Rosa A.J.M."/>
            <person name="de Rosa V.E. Jr."/>
            <person name="de Sa R.G."/>
            <person name="Santelli R.V."/>
            <person name="Sawasaki H.E."/>
            <person name="da Silva A.C.R."/>
            <person name="da Silva A.M."/>
            <person name="da Silva F.R."/>
            <person name="Silva W.A. Jr."/>
            <person name="da Silveira J.F."/>
            <person name="Silvestri M.L.Z."/>
            <person name="Siqueira W.J."/>
            <person name="de Souza A.A."/>
            <person name="de Souza A.P."/>
            <person name="Terenzi M.F."/>
            <person name="Truffi D."/>
            <person name="Tsai S.M."/>
            <person name="Tsuhako M.H."/>
            <person name="Vallada H."/>
            <person name="Van Sluys M.A."/>
            <person name="Verjovski-Almeida S."/>
            <person name="Vettore A.L."/>
            <person name="Zago M.A."/>
            <person name="Zatz M."/>
            <person name="Meidanis J."/>
            <person name="Setubal J.C."/>
        </authorList>
    </citation>
    <scope>NUCLEOTIDE SEQUENCE [LARGE SCALE GENOMIC DNA]</scope>
    <source>
        <strain>9a5c</strain>
    </source>
</reference>
<organism>
    <name type="scientific">Xylella fastidiosa (strain 9a5c)</name>
    <dbReference type="NCBI Taxonomy" id="160492"/>
    <lineage>
        <taxon>Bacteria</taxon>
        <taxon>Pseudomonadati</taxon>
        <taxon>Pseudomonadota</taxon>
        <taxon>Gammaproteobacteria</taxon>
        <taxon>Lysobacterales</taxon>
        <taxon>Lysobacteraceae</taxon>
        <taxon>Xylella</taxon>
    </lineage>
</organism>